<feature type="chain" id="PRO_0000102005" description="ATP-dependent DNA helicase DinG">
    <location>
        <begin position="1"/>
        <end position="692"/>
    </location>
</feature>
<feature type="domain" description="Helicase ATP-binding" evidence="1">
    <location>
        <begin position="16"/>
        <end position="293"/>
    </location>
</feature>
<feature type="domain" description="Helicase C-terminal" evidence="1">
    <location>
        <begin position="514"/>
        <end position="692"/>
    </location>
</feature>
<feature type="short sequence motif" description="DEAH box" evidence="1">
    <location>
        <begin position="134"/>
        <end position="137"/>
    </location>
</feature>
<feature type="short sequence motif" description="DEAH box" evidence="1">
    <location>
        <begin position="247"/>
        <end position="250"/>
    </location>
</feature>
<feature type="binding site" evidence="1 2">
    <location>
        <begin position="56"/>
        <end position="63"/>
    </location>
    <ligand>
        <name>ATP</name>
        <dbReference type="ChEBI" id="CHEBI:30616"/>
    </ligand>
</feature>
<feature type="binding site" evidence="1">
    <location>
        <position position="123"/>
    </location>
    <ligand>
        <name>[4Fe-4S] cluster</name>
        <dbReference type="ChEBI" id="CHEBI:49883"/>
    </ligand>
</feature>
<feature type="binding site" evidence="1">
    <location>
        <position position="192"/>
    </location>
    <ligand>
        <name>[4Fe-4S] cluster</name>
        <dbReference type="ChEBI" id="CHEBI:49883"/>
    </ligand>
</feature>
<feature type="binding site" evidence="1">
    <location>
        <position position="202"/>
    </location>
    <ligand>
        <name>[4Fe-4S] cluster</name>
        <dbReference type="ChEBI" id="CHEBI:49883"/>
    </ligand>
</feature>
<feature type="sequence conflict" description="In Ref. 2; CAA47468." evidence="2" ref="2">
    <original>R</original>
    <variation>A</variation>
    <location>
        <position position="118"/>
    </location>
</feature>
<evidence type="ECO:0000255" key="1">
    <source>
        <dbReference type="HAMAP-Rule" id="MF_02205"/>
    </source>
</evidence>
<evidence type="ECO:0000305" key="2"/>
<name>DING_PHOPR</name>
<accession>P29741</accession>
<protein>
    <recommendedName>
        <fullName evidence="1">ATP-dependent DNA helicase DinG</fullName>
        <ecNumber evidence="1">5.6.2.3</ecNumber>
    </recommendedName>
    <alternativeName>
        <fullName evidence="1">DNA 5'-3' helicase subunit DinG</fullName>
    </alternativeName>
</protein>
<keyword id="KW-0004">4Fe-4S</keyword>
<keyword id="KW-0067">ATP-binding</keyword>
<keyword id="KW-0238">DNA-binding</keyword>
<keyword id="KW-0347">Helicase</keyword>
<keyword id="KW-0378">Hydrolase</keyword>
<keyword id="KW-0408">Iron</keyword>
<keyword id="KW-0411">Iron-sulfur</keyword>
<keyword id="KW-0413">Isomerase</keyword>
<keyword id="KW-0479">Metal-binding</keyword>
<keyword id="KW-0547">Nucleotide-binding</keyword>
<keyword id="KW-1185">Reference proteome</keyword>
<sequence>MLHSQIKSDIKQCYENLGNQLDNFIPRRAQNYLVAEIAKTLAGEYHQKHRMLVGEAGTGIGKSLAYLLGGIPFALFNNKKLLISTATVALQEQLINKDLPLFNRIYPKEFSFILAKGRQRYCCNHKLEACCATNNDQQVTLWEEKPKKSDLDLLRRMLKATRDGKWDGDRDSWPTTIPDRVWPQIMADKHSCHAGLPQHRSCPFAKAREHLDKADVIIANHALLMADIELGGGVILPEPEQTIYVIDEAHHLPKVARDFSSAASSLKGAATWLEKLNQTIGKLAELAEYKKAARFQDAILENIQHLIPTLRQVANNVDVGMFSKDGIYRFEHGELPAWLEQEAKGCKDASKKALQSLGKIHDLISERLKDNEIQQRLGEQALAESGVYLQRLENLEKVWALMAQPKKDKGAPLARWIEKNPDNEGDYIIQVSPLEVGYRLDQLLWSRAAGAILVSATLRALNQFTYFCRQVGIYEMDSTRFLALASPFDYQNNARLVIPALSLEPQADKFTDLLIKTLPEYLEGETASLVLFSSYWQMNKVADELRPLAKKNKWELLVQGEESRHITLKKHKDNCKSGKPSILFGTGSFSEGLDLPGDLLKNLIITKIPFGVPTSPVEEAHAEYIESCGGNPFMQISVPEASKKLIQSVGRLIRKEDDMGRVVLLDRRIINRRYGKALLDSLPPFKRVIEYS</sequence>
<dbReference type="EC" id="5.6.2.3" evidence="1"/>
<dbReference type="EMBL" id="CR378666">
    <property type="protein sequence ID" value="CAG19422.1"/>
    <property type="molecule type" value="Genomic_DNA"/>
</dbReference>
<dbReference type="EMBL" id="X67094">
    <property type="protein sequence ID" value="CAA47468.1"/>
    <property type="molecule type" value="Genomic_DNA"/>
</dbReference>
<dbReference type="PIR" id="S23215">
    <property type="entry name" value="S23215"/>
</dbReference>
<dbReference type="RefSeq" id="WP_011217756.1">
    <property type="nucleotide sequence ID" value="NC_006370.1"/>
</dbReference>
<dbReference type="SMR" id="P29741"/>
<dbReference type="STRING" id="298386.PBPRA1011"/>
<dbReference type="KEGG" id="ppr:PBPRA1011"/>
<dbReference type="eggNOG" id="COG1199">
    <property type="taxonomic scope" value="Bacteria"/>
</dbReference>
<dbReference type="HOGENOM" id="CLU_012117_4_1_6"/>
<dbReference type="Proteomes" id="UP000000593">
    <property type="component" value="Chromosome 1"/>
</dbReference>
<dbReference type="GO" id="GO:0051539">
    <property type="term" value="F:4 iron, 4 sulfur cluster binding"/>
    <property type="evidence" value="ECO:0007669"/>
    <property type="project" value="UniProtKB-UniRule"/>
</dbReference>
<dbReference type="GO" id="GO:0043139">
    <property type="term" value="F:5'-3' DNA helicase activity"/>
    <property type="evidence" value="ECO:0007669"/>
    <property type="project" value="UniProtKB-UniRule"/>
</dbReference>
<dbReference type="GO" id="GO:0005524">
    <property type="term" value="F:ATP binding"/>
    <property type="evidence" value="ECO:0007669"/>
    <property type="project" value="UniProtKB-UniRule"/>
</dbReference>
<dbReference type="GO" id="GO:0016887">
    <property type="term" value="F:ATP hydrolysis activity"/>
    <property type="evidence" value="ECO:0007669"/>
    <property type="project" value="RHEA"/>
</dbReference>
<dbReference type="GO" id="GO:0003677">
    <property type="term" value="F:DNA binding"/>
    <property type="evidence" value="ECO:0007669"/>
    <property type="project" value="UniProtKB-UniRule"/>
</dbReference>
<dbReference type="GO" id="GO:0033677">
    <property type="term" value="F:DNA/RNA helicase activity"/>
    <property type="evidence" value="ECO:0007669"/>
    <property type="project" value="TreeGrafter"/>
</dbReference>
<dbReference type="GO" id="GO:0046872">
    <property type="term" value="F:metal ion binding"/>
    <property type="evidence" value="ECO:0007669"/>
    <property type="project" value="UniProtKB-KW"/>
</dbReference>
<dbReference type="GO" id="GO:0006281">
    <property type="term" value="P:DNA repair"/>
    <property type="evidence" value="ECO:0007669"/>
    <property type="project" value="TreeGrafter"/>
</dbReference>
<dbReference type="GO" id="GO:0009432">
    <property type="term" value="P:SOS response"/>
    <property type="evidence" value="ECO:0007669"/>
    <property type="project" value="TreeGrafter"/>
</dbReference>
<dbReference type="Gene3D" id="3.40.50.300">
    <property type="entry name" value="P-loop containing nucleotide triphosphate hydrolases"/>
    <property type="match status" value="2"/>
</dbReference>
<dbReference type="HAMAP" id="MF_02205">
    <property type="entry name" value="DinG_proteobact"/>
    <property type="match status" value="1"/>
</dbReference>
<dbReference type="InterPro" id="IPR006555">
    <property type="entry name" value="ATP-dep_Helicase_C"/>
</dbReference>
<dbReference type="InterPro" id="IPR045028">
    <property type="entry name" value="DinG/Rad3-like"/>
</dbReference>
<dbReference type="InterPro" id="IPR039000">
    <property type="entry name" value="DinG_proteobact"/>
</dbReference>
<dbReference type="InterPro" id="IPR014013">
    <property type="entry name" value="Helic_SF1/SF2_ATP-bd_DinG/Rad3"/>
</dbReference>
<dbReference type="InterPro" id="IPR027417">
    <property type="entry name" value="P-loop_NTPase"/>
</dbReference>
<dbReference type="InterPro" id="IPR010614">
    <property type="entry name" value="RAD3-like_helicase_DEAD"/>
</dbReference>
<dbReference type="NCBIfam" id="NF008729">
    <property type="entry name" value="PRK11747.1"/>
    <property type="match status" value="1"/>
</dbReference>
<dbReference type="PANTHER" id="PTHR11472:SF59">
    <property type="entry name" value="ATP-DEPENDENT DNA HELICASE DING"/>
    <property type="match status" value="1"/>
</dbReference>
<dbReference type="PANTHER" id="PTHR11472">
    <property type="entry name" value="DNA REPAIR DEAD HELICASE RAD3/XP-D SUBFAMILY MEMBER"/>
    <property type="match status" value="1"/>
</dbReference>
<dbReference type="Pfam" id="PF06733">
    <property type="entry name" value="DEAD_2"/>
    <property type="match status" value="1"/>
</dbReference>
<dbReference type="Pfam" id="PF13307">
    <property type="entry name" value="Helicase_C_2"/>
    <property type="match status" value="1"/>
</dbReference>
<dbReference type="SMART" id="SM00491">
    <property type="entry name" value="HELICc2"/>
    <property type="match status" value="1"/>
</dbReference>
<dbReference type="SUPFAM" id="SSF52540">
    <property type="entry name" value="P-loop containing nucleoside triphosphate hydrolases"/>
    <property type="match status" value="2"/>
</dbReference>
<dbReference type="PROSITE" id="PS51193">
    <property type="entry name" value="HELICASE_ATP_BIND_2"/>
    <property type="match status" value="1"/>
</dbReference>
<dbReference type="PROSITE" id="PS51194">
    <property type="entry name" value="HELICASE_CTER"/>
    <property type="match status" value="1"/>
</dbReference>
<gene>
    <name evidence="1" type="primary">dinG</name>
    <name type="ordered locus">PBPRA1011</name>
</gene>
<proteinExistence type="inferred from homology"/>
<comment type="function">
    <text evidence="1">DNA-dependent ATPase and 5'-3' DNA helicase. Unwinds D-loops, R-loops, forked DNA and G-quadruplex DNA.</text>
</comment>
<comment type="catalytic activity">
    <reaction evidence="1">
        <text>Couples ATP hydrolysis with the unwinding of duplex DNA at the replication fork by translocating in the 5'-3' direction. This creates two antiparallel DNA single strands (ssDNA). The leading ssDNA polymer is the template for DNA polymerase III holoenzyme which synthesizes a continuous strand.</text>
        <dbReference type="EC" id="5.6.2.3"/>
    </reaction>
</comment>
<comment type="catalytic activity">
    <reaction evidence="1">
        <text>ATP + H2O = ADP + phosphate + H(+)</text>
        <dbReference type="Rhea" id="RHEA:13065"/>
        <dbReference type="ChEBI" id="CHEBI:15377"/>
        <dbReference type="ChEBI" id="CHEBI:15378"/>
        <dbReference type="ChEBI" id="CHEBI:30616"/>
        <dbReference type="ChEBI" id="CHEBI:43474"/>
        <dbReference type="ChEBI" id="CHEBI:456216"/>
        <dbReference type="EC" id="5.6.2.3"/>
    </reaction>
</comment>
<comment type="cofactor">
    <cofactor evidence="1">
        <name>[4Fe-4S] cluster</name>
        <dbReference type="ChEBI" id="CHEBI:49883"/>
    </cofactor>
    <text evidence="1">Binds 1 [4Fe-4S] cluster.</text>
</comment>
<comment type="similarity">
    <text evidence="1">Belongs to the helicase family. DinG subfamily. Type 1 sub-subfamily.</text>
</comment>
<reference key="1">
    <citation type="journal article" date="2005" name="Science">
        <title>Life at depth: Photobacterium profundum genome sequence and expression analysis.</title>
        <authorList>
            <person name="Vezzi A."/>
            <person name="Campanaro S."/>
            <person name="D'Angelo M."/>
            <person name="Simonato F."/>
            <person name="Vitulo N."/>
            <person name="Lauro F.M."/>
            <person name="Cestaro A."/>
            <person name="Malacrida G."/>
            <person name="Simionati B."/>
            <person name="Cannata N."/>
            <person name="Romualdi C."/>
            <person name="Bartlett D.H."/>
            <person name="Valle G."/>
        </authorList>
    </citation>
    <scope>NUCLEOTIDE SEQUENCE [LARGE SCALE GENOMIC DNA]</scope>
    <source>
        <strain>ATCC BAA-1253 / SS9</strain>
    </source>
</reference>
<reference key="2">
    <citation type="journal article" date="1993" name="Gene">
        <title>Sequence of the ompH gene from the deep-sea bacterium Photobacterium SS9.</title>
        <authorList>
            <person name="Bartlett D.H."/>
            <person name="Chi E."/>
            <person name="Wright M.E."/>
        </authorList>
    </citation>
    <scope>NUCLEOTIDE SEQUENCE [GENOMIC DNA] OF 1-151</scope>
</reference>
<reference key="3">
    <citation type="journal article" date="1993" name="Nucleic Acids Res.">
        <title>Escherichia coli dinG gene encodes a putative DNA helicase related to a group of eukaryotic helicases including Rad3 protein.</title>
        <authorList>
            <person name="Koonin E.V."/>
        </authorList>
    </citation>
    <scope>SIMILARITY TO DING</scope>
</reference>
<organism>
    <name type="scientific">Photobacterium profundum (strain SS9)</name>
    <dbReference type="NCBI Taxonomy" id="298386"/>
    <lineage>
        <taxon>Bacteria</taxon>
        <taxon>Pseudomonadati</taxon>
        <taxon>Pseudomonadota</taxon>
        <taxon>Gammaproteobacteria</taxon>
        <taxon>Vibrionales</taxon>
        <taxon>Vibrionaceae</taxon>
        <taxon>Photobacterium</taxon>
    </lineage>
</organism>